<organism>
    <name type="scientific">Clostridium botulinum (strain Langeland / NCTC 10281 / Type F)</name>
    <dbReference type="NCBI Taxonomy" id="441772"/>
    <lineage>
        <taxon>Bacteria</taxon>
        <taxon>Bacillati</taxon>
        <taxon>Bacillota</taxon>
        <taxon>Clostridia</taxon>
        <taxon>Eubacteriales</taxon>
        <taxon>Clostridiaceae</taxon>
        <taxon>Clostridium</taxon>
    </lineage>
</organism>
<reference key="1">
    <citation type="submission" date="2007-06" db="EMBL/GenBank/DDBJ databases">
        <authorList>
            <person name="Brinkac L.M."/>
            <person name="Daugherty S."/>
            <person name="Dodson R.J."/>
            <person name="Madupu R."/>
            <person name="Brown J.L."/>
            <person name="Bruce D."/>
            <person name="Detter C."/>
            <person name="Munk C."/>
            <person name="Smith L.A."/>
            <person name="Smith T.J."/>
            <person name="White O."/>
            <person name="Brettin T.S."/>
        </authorList>
    </citation>
    <scope>NUCLEOTIDE SEQUENCE [LARGE SCALE GENOMIC DNA]</scope>
    <source>
        <strain>Langeland / NCTC 10281 / Type F</strain>
    </source>
</reference>
<protein>
    <recommendedName>
        <fullName evidence="1">ATP synthase epsilon chain</fullName>
    </recommendedName>
    <alternativeName>
        <fullName evidence="1">ATP synthase F1 sector epsilon subunit</fullName>
    </alternativeName>
    <alternativeName>
        <fullName evidence="1">F-ATPase epsilon subunit</fullName>
    </alternativeName>
</protein>
<sequence length="133" mass="15209">MKDNIELAIFTPEKNIKIGEIKEVITEGLDGDLAILPNHVNMITYLKPTITKYIDLNGNKNNIFTSSGVLKVEDNKVYIICDASEKPEDIDIKRAENAKKRAEERLRNKKEIDVKRAELALFRSIARIKIKEL</sequence>
<feature type="chain" id="PRO_1000056475" description="ATP synthase epsilon chain">
    <location>
        <begin position="1"/>
        <end position="133"/>
    </location>
</feature>
<dbReference type="EMBL" id="CP000728">
    <property type="protein sequence ID" value="ABS42744.1"/>
    <property type="molecule type" value="Genomic_DNA"/>
</dbReference>
<dbReference type="RefSeq" id="WP_011987241.1">
    <property type="nucleotide sequence ID" value="NC_009699.1"/>
</dbReference>
<dbReference type="SMR" id="A7G9R0"/>
<dbReference type="KEGG" id="cbf:CLI_0212"/>
<dbReference type="HOGENOM" id="CLU_084338_1_1_9"/>
<dbReference type="Proteomes" id="UP000002410">
    <property type="component" value="Chromosome"/>
</dbReference>
<dbReference type="GO" id="GO:0005886">
    <property type="term" value="C:plasma membrane"/>
    <property type="evidence" value="ECO:0007669"/>
    <property type="project" value="UniProtKB-SubCell"/>
</dbReference>
<dbReference type="GO" id="GO:0045259">
    <property type="term" value="C:proton-transporting ATP synthase complex"/>
    <property type="evidence" value="ECO:0007669"/>
    <property type="project" value="UniProtKB-KW"/>
</dbReference>
<dbReference type="GO" id="GO:0005524">
    <property type="term" value="F:ATP binding"/>
    <property type="evidence" value="ECO:0007669"/>
    <property type="project" value="UniProtKB-UniRule"/>
</dbReference>
<dbReference type="GO" id="GO:0046933">
    <property type="term" value="F:proton-transporting ATP synthase activity, rotational mechanism"/>
    <property type="evidence" value="ECO:0007669"/>
    <property type="project" value="UniProtKB-UniRule"/>
</dbReference>
<dbReference type="CDD" id="cd12152">
    <property type="entry name" value="F1-ATPase_delta"/>
    <property type="match status" value="1"/>
</dbReference>
<dbReference type="Gene3D" id="1.20.5.440">
    <property type="entry name" value="ATP synthase delta/epsilon subunit, C-terminal domain"/>
    <property type="match status" value="1"/>
</dbReference>
<dbReference type="Gene3D" id="2.60.15.10">
    <property type="entry name" value="F0F1 ATP synthase delta/epsilon subunit, N-terminal"/>
    <property type="match status" value="1"/>
</dbReference>
<dbReference type="HAMAP" id="MF_00530">
    <property type="entry name" value="ATP_synth_epsil_bac"/>
    <property type="match status" value="1"/>
</dbReference>
<dbReference type="InterPro" id="IPR036794">
    <property type="entry name" value="ATP_F1_dsu/esu_C_sf"/>
</dbReference>
<dbReference type="InterPro" id="IPR001469">
    <property type="entry name" value="ATP_synth_F1_dsu/esu"/>
</dbReference>
<dbReference type="InterPro" id="IPR020546">
    <property type="entry name" value="ATP_synth_F1_dsu/esu_N"/>
</dbReference>
<dbReference type="InterPro" id="IPR020547">
    <property type="entry name" value="ATP_synth_F1_esu_C"/>
</dbReference>
<dbReference type="InterPro" id="IPR036771">
    <property type="entry name" value="ATPsynth_dsu/esu_N"/>
</dbReference>
<dbReference type="NCBIfam" id="TIGR01216">
    <property type="entry name" value="ATP_synt_epsi"/>
    <property type="match status" value="1"/>
</dbReference>
<dbReference type="NCBIfam" id="NF009984">
    <property type="entry name" value="PRK13450.1"/>
    <property type="match status" value="1"/>
</dbReference>
<dbReference type="PANTHER" id="PTHR13822">
    <property type="entry name" value="ATP SYNTHASE DELTA/EPSILON CHAIN"/>
    <property type="match status" value="1"/>
</dbReference>
<dbReference type="PANTHER" id="PTHR13822:SF10">
    <property type="entry name" value="ATP SYNTHASE EPSILON CHAIN, CHLOROPLASTIC"/>
    <property type="match status" value="1"/>
</dbReference>
<dbReference type="Pfam" id="PF00401">
    <property type="entry name" value="ATP-synt_DE"/>
    <property type="match status" value="1"/>
</dbReference>
<dbReference type="Pfam" id="PF02823">
    <property type="entry name" value="ATP-synt_DE_N"/>
    <property type="match status" value="1"/>
</dbReference>
<dbReference type="SUPFAM" id="SSF46604">
    <property type="entry name" value="Epsilon subunit of F1F0-ATP synthase C-terminal domain"/>
    <property type="match status" value="1"/>
</dbReference>
<dbReference type="SUPFAM" id="SSF51344">
    <property type="entry name" value="Epsilon subunit of F1F0-ATP synthase N-terminal domain"/>
    <property type="match status" value="1"/>
</dbReference>
<name>ATPE_CLOBL</name>
<proteinExistence type="inferred from homology"/>
<gene>
    <name evidence="1" type="primary">atpC</name>
    <name type="ordered locus">CLI_0212</name>
</gene>
<keyword id="KW-0066">ATP synthesis</keyword>
<keyword id="KW-1003">Cell membrane</keyword>
<keyword id="KW-0139">CF(1)</keyword>
<keyword id="KW-0375">Hydrogen ion transport</keyword>
<keyword id="KW-0406">Ion transport</keyword>
<keyword id="KW-0472">Membrane</keyword>
<keyword id="KW-0813">Transport</keyword>
<comment type="function">
    <text evidence="1">Produces ATP from ADP in the presence of a proton gradient across the membrane.</text>
</comment>
<comment type="subunit">
    <text evidence="1">F-type ATPases have 2 components, CF(1) - the catalytic core - and CF(0) - the membrane proton channel. CF(1) has five subunits: alpha(3), beta(3), gamma(1), delta(1), epsilon(1). CF(0) has three main subunits: a, b and c.</text>
</comment>
<comment type="subcellular location">
    <subcellularLocation>
        <location evidence="1">Cell membrane</location>
        <topology evidence="1">Peripheral membrane protein</topology>
    </subcellularLocation>
</comment>
<comment type="similarity">
    <text evidence="1">Belongs to the ATPase epsilon chain family.</text>
</comment>
<evidence type="ECO:0000255" key="1">
    <source>
        <dbReference type="HAMAP-Rule" id="MF_00530"/>
    </source>
</evidence>
<accession>A7G9R0</accession>